<sequence length="255" mass="28422">MWIGIISLFPEMFRAITDYGVTGRAVKNGLLSIQSWSPRDFTHDRHRTVDDRPYGGGPGMLMMVQPLRDAIHAAKAAAGEGAKVIYLSPQGRKLDQAGVSELATNQKLILVCGRYEGIDERVIQTEIDEEWSIGDYVLSGGELPAMTLIDSVSRFIPGVLGHEASATEDSFAEGLLDCPHYTRPEVLEGMEVPPVLLSGNHAEIRRWRLKQSLGRTWLRRPELLENLALTEEQARLLAEFKTEHAQQQHKHDGMA</sequence>
<gene>
    <name evidence="1" type="primary">trmD</name>
    <name type="ordered locus">BWG_2366</name>
</gene>
<proteinExistence type="inferred from homology"/>
<organism>
    <name type="scientific">Escherichia coli (strain K12 / MC4100 / BW2952)</name>
    <dbReference type="NCBI Taxonomy" id="595496"/>
    <lineage>
        <taxon>Bacteria</taxon>
        <taxon>Pseudomonadati</taxon>
        <taxon>Pseudomonadota</taxon>
        <taxon>Gammaproteobacteria</taxon>
        <taxon>Enterobacterales</taxon>
        <taxon>Enterobacteriaceae</taxon>
        <taxon>Escherichia</taxon>
    </lineage>
</organism>
<dbReference type="EC" id="2.1.1.228" evidence="1"/>
<dbReference type="EMBL" id="CP001396">
    <property type="protein sequence ID" value="ACR65703.1"/>
    <property type="molecule type" value="Genomic_DNA"/>
</dbReference>
<dbReference type="RefSeq" id="WP_000264777.1">
    <property type="nucleotide sequence ID" value="NC_012759.1"/>
</dbReference>
<dbReference type="SMR" id="C4ZYM5"/>
<dbReference type="GeneID" id="93774457"/>
<dbReference type="KEGG" id="ebw:BWG_2366"/>
<dbReference type="HOGENOM" id="CLU_047363_0_1_6"/>
<dbReference type="GO" id="GO:0005829">
    <property type="term" value="C:cytosol"/>
    <property type="evidence" value="ECO:0007669"/>
    <property type="project" value="TreeGrafter"/>
</dbReference>
<dbReference type="GO" id="GO:0052906">
    <property type="term" value="F:tRNA (guanine(37)-N1)-methyltransferase activity"/>
    <property type="evidence" value="ECO:0007669"/>
    <property type="project" value="UniProtKB-UniRule"/>
</dbReference>
<dbReference type="GO" id="GO:0002939">
    <property type="term" value="P:tRNA N1-guanine methylation"/>
    <property type="evidence" value="ECO:0007669"/>
    <property type="project" value="TreeGrafter"/>
</dbReference>
<dbReference type="CDD" id="cd18080">
    <property type="entry name" value="TrmD-like"/>
    <property type="match status" value="1"/>
</dbReference>
<dbReference type="FunFam" id="1.10.1270.20:FF:000001">
    <property type="entry name" value="tRNA (guanine-N(1)-)-methyltransferase"/>
    <property type="match status" value="1"/>
</dbReference>
<dbReference type="FunFam" id="3.40.1280.10:FF:000001">
    <property type="entry name" value="tRNA (guanine-N(1)-)-methyltransferase"/>
    <property type="match status" value="1"/>
</dbReference>
<dbReference type="Gene3D" id="3.40.1280.10">
    <property type="match status" value="1"/>
</dbReference>
<dbReference type="Gene3D" id="1.10.1270.20">
    <property type="entry name" value="tRNA(m1g37)methyltransferase, domain 2"/>
    <property type="match status" value="1"/>
</dbReference>
<dbReference type="HAMAP" id="MF_00605">
    <property type="entry name" value="TrmD"/>
    <property type="match status" value="1"/>
</dbReference>
<dbReference type="InterPro" id="IPR029028">
    <property type="entry name" value="Alpha/beta_knot_MTases"/>
</dbReference>
<dbReference type="InterPro" id="IPR023148">
    <property type="entry name" value="tRNA_m1G_MeTrfase_C_sf"/>
</dbReference>
<dbReference type="InterPro" id="IPR002649">
    <property type="entry name" value="tRNA_m1G_MeTrfase_TrmD"/>
</dbReference>
<dbReference type="InterPro" id="IPR029026">
    <property type="entry name" value="tRNA_m1G_MTases_N"/>
</dbReference>
<dbReference type="InterPro" id="IPR016009">
    <property type="entry name" value="tRNA_MeTrfase_TRMD/TRM10"/>
</dbReference>
<dbReference type="NCBIfam" id="NF000648">
    <property type="entry name" value="PRK00026.1"/>
    <property type="match status" value="1"/>
</dbReference>
<dbReference type="NCBIfam" id="TIGR00088">
    <property type="entry name" value="trmD"/>
    <property type="match status" value="1"/>
</dbReference>
<dbReference type="PANTHER" id="PTHR46417">
    <property type="entry name" value="TRNA (GUANINE-N(1)-)-METHYLTRANSFERASE"/>
    <property type="match status" value="1"/>
</dbReference>
<dbReference type="PANTHER" id="PTHR46417:SF1">
    <property type="entry name" value="TRNA (GUANINE-N(1)-)-METHYLTRANSFERASE"/>
    <property type="match status" value="1"/>
</dbReference>
<dbReference type="Pfam" id="PF01746">
    <property type="entry name" value="tRNA_m1G_MT"/>
    <property type="match status" value="1"/>
</dbReference>
<dbReference type="PIRSF" id="PIRSF000386">
    <property type="entry name" value="tRNA_mtase"/>
    <property type="match status" value="1"/>
</dbReference>
<dbReference type="SUPFAM" id="SSF75217">
    <property type="entry name" value="alpha/beta knot"/>
    <property type="match status" value="1"/>
</dbReference>
<comment type="function">
    <text evidence="1">Specifically methylates guanosine-37 in various tRNAs.</text>
</comment>
<comment type="catalytic activity">
    <reaction evidence="1">
        <text>guanosine(37) in tRNA + S-adenosyl-L-methionine = N(1)-methylguanosine(37) in tRNA + S-adenosyl-L-homocysteine + H(+)</text>
        <dbReference type="Rhea" id="RHEA:36899"/>
        <dbReference type="Rhea" id="RHEA-COMP:10145"/>
        <dbReference type="Rhea" id="RHEA-COMP:10147"/>
        <dbReference type="ChEBI" id="CHEBI:15378"/>
        <dbReference type="ChEBI" id="CHEBI:57856"/>
        <dbReference type="ChEBI" id="CHEBI:59789"/>
        <dbReference type="ChEBI" id="CHEBI:73542"/>
        <dbReference type="ChEBI" id="CHEBI:74269"/>
        <dbReference type="EC" id="2.1.1.228"/>
    </reaction>
</comment>
<comment type="subunit">
    <text evidence="1">Homodimer.</text>
</comment>
<comment type="subcellular location">
    <subcellularLocation>
        <location evidence="1">Cytoplasm</location>
    </subcellularLocation>
</comment>
<comment type="similarity">
    <text evidence="1">Belongs to the RNA methyltransferase TrmD family.</text>
</comment>
<feature type="chain" id="PRO_1000212223" description="tRNA (guanine-N(1)-)-methyltransferase">
    <location>
        <begin position="1"/>
        <end position="255"/>
    </location>
</feature>
<feature type="binding site" evidence="1">
    <location>
        <position position="113"/>
    </location>
    <ligand>
        <name>S-adenosyl-L-methionine</name>
        <dbReference type="ChEBI" id="CHEBI:59789"/>
    </ligand>
</feature>
<feature type="binding site" evidence="1">
    <location>
        <begin position="133"/>
        <end position="138"/>
    </location>
    <ligand>
        <name>S-adenosyl-L-methionine</name>
        <dbReference type="ChEBI" id="CHEBI:59789"/>
    </ligand>
</feature>
<protein>
    <recommendedName>
        <fullName evidence="1">tRNA (guanine-N(1)-)-methyltransferase</fullName>
        <ecNumber evidence="1">2.1.1.228</ecNumber>
    </recommendedName>
    <alternativeName>
        <fullName evidence="1">M1G-methyltransferase</fullName>
    </alternativeName>
    <alternativeName>
        <fullName evidence="1">tRNA [GM37] methyltransferase</fullName>
    </alternativeName>
</protein>
<evidence type="ECO:0000255" key="1">
    <source>
        <dbReference type="HAMAP-Rule" id="MF_00605"/>
    </source>
</evidence>
<keyword id="KW-0963">Cytoplasm</keyword>
<keyword id="KW-0489">Methyltransferase</keyword>
<keyword id="KW-0949">S-adenosyl-L-methionine</keyword>
<keyword id="KW-0808">Transferase</keyword>
<keyword id="KW-0819">tRNA processing</keyword>
<accession>C4ZYM5</accession>
<reference key="1">
    <citation type="journal article" date="2009" name="J. Bacteriol.">
        <title>Genomic sequencing reveals regulatory mutations and recombinational events in the widely used MC4100 lineage of Escherichia coli K-12.</title>
        <authorList>
            <person name="Ferenci T."/>
            <person name="Zhou Z."/>
            <person name="Betteridge T."/>
            <person name="Ren Y."/>
            <person name="Liu Y."/>
            <person name="Feng L."/>
            <person name="Reeves P.R."/>
            <person name="Wang L."/>
        </authorList>
    </citation>
    <scope>NUCLEOTIDE SEQUENCE [LARGE SCALE GENOMIC DNA]</scope>
    <source>
        <strain>K12 / MC4100 / BW2952</strain>
    </source>
</reference>
<name>TRMD_ECOBW</name>